<name>MINE_PROMS</name>
<dbReference type="EMBL" id="CP000551">
    <property type="protein sequence ID" value="ABM69632.1"/>
    <property type="molecule type" value="Genomic_DNA"/>
</dbReference>
<dbReference type="RefSeq" id="WP_011817807.1">
    <property type="nucleotide sequence ID" value="NC_008816.1"/>
</dbReference>
<dbReference type="SMR" id="A2BPC1"/>
<dbReference type="STRING" id="146891.A9601_03441"/>
<dbReference type="KEGG" id="pmb:A9601_03441"/>
<dbReference type="eggNOG" id="COG0851">
    <property type="taxonomic scope" value="Bacteria"/>
</dbReference>
<dbReference type="HOGENOM" id="CLU_137929_1_1_3"/>
<dbReference type="Proteomes" id="UP000002590">
    <property type="component" value="Chromosome"/>
</dbReference>
<dbReference type="GO" id="GO:0051301">
    <property type="term" value="P:cell division"/>
    <property type="evidence" value="ECO:0007669"/>
    <property type="project" value="UniProtKB-KW"/>
</dbReference>
<dbReference type="GO" id="GO:0032955">
    <property type="term" value="P:regulation of division septum assembly"/>
    <property type="evidence" value="ECO:0007669"/>
    <property type="project" value="InterPro"/>
</dbReference>
<dbReference type="Gene3D" id="3.30.1070.10">
    <property type="entry name" value="Cell division topological specificity factor MinE"/>
    <property type="match status" value="1"/>
</dbReference>
<dbReference type="HAMAP" id="MF_00262">
    <property type="entry name" value="MinE"/>
    <property type="match status" value="1"/>
</dbReference>
<dbReference type="InterPro" id="IPR005527">
    <property type="entry name" value="MinE"/>
</dbReference>
<dbReference type="InterPro" id="IPR036707">
    <property type="entry name" value="MinE_sf"/>
</dbReference>
<dbReference type="NCBIfam" id="TIGR01215">
    <property type="entry name" value="minE"/>
    <property type="match status" value="1"/>
</dbReference>
<dbReference type="NCBIfam" id="NF001422">
    <property type="entry name" value="PRK00296.1"/>
    <property type="match status" value="1"/>
</dbReference>
<dbReference type="Pfam" id="PF03776">
    <property type="entry name" value="MinE"/>
    <property type="match status" value="1"/>
</dbReference>
<dbReference type="SUPFAM" id="SSF55229">
    <property type="entry name" value="Cell division protein MinE topological specificity domain"/>
    <property type="match status" value="1"/>
</dbReference>
<gene>
    <name evidence="1" type="primary">minE</name>
    <name type="ordered locus">A9601_03441</name>
</gene>
<reference key="1">
    <citation type="journal article" date="2007" name="PLoS Genet.">
        <title>Patterns and implications of gene gain and loss in the evolution of Prochlorococcus.</title>
        <authorList>
            <person name="Kettler G.C."/>
            <person name="Martiny A.C."/>
            <person name="Huang K."/>
            <person name="Zucker J."/>
            <person name="Coleman M.L."/>
            <person name="Rodrigue S."/>
            <person name="Chen F."/>
            <person name="Lapidus A."/>
            <person name="Ferriera S."/>
            <person name="Johnson J."/>
            <person name="Steglich C."/>
            <person name="Church G.M."/>
            <person name="Richardson P."/>
            <person name="Chisholm S.W."/>
        </authorList>
    </citation>
    <scope>NUCLEOTIDE SEQUENCE [LARGE SCALE GENOMIC DNA]</scope>
    <source>
        <strain>AS9601</strain>
    </source>
</reference>
<sequence length="108" mass="12291">MMTLRDLINKLLGRETSSANTARERLQLVLAHDRVDMSSLTTDLLDKMRKEILDVVAKYVEIDFDEVAVSLETEDRMTALVANLPIKRTISGEIKFKKADKANKDIKK</sequence>
<evidence type="ECO:0000255" key="1">
    <source>
        <dbReference type="HAMAP-Rule" id="MF_00262"/>
    </source>
</evidence>
<accession>A2BPC1</accession>
<feature type="chain" id="PRO_0000298148" description="Cell division topological specificity factor">
    <location>
        <begin position="1"/>
        <end position="108"/>
    </location>
</feature>
<keyword id="KW-0131">Cell cycle</keyword>
<keyword id="KW-0132">Cell division</keyword>
<proteinExistence type="inferred from homology"/>
<protein>
    <recommendedName>
        <fullName evidence="1">Cell division topological specificity factor</fullName>
    </recommendedName>
</protein>
<organism>
    <name type="scientific">Prochlorococcus marinus (strain AS9601)</name>
    <dbReference type="NCBI Taxonomy" id="146891"/>
    <lineage>
        <taxon>Bacteria</taxon>
        <taxon>Bacillati</taxon>
        <taxon>Cyanobacteriota</taxon>
        <taxon>Cyanophyceae</taxon>
        <taxon>Synechococcales</taxon>
        <taxon>Prochlorococcaceae</taxon>
        <taxon>Prochlorococcus</taxon>
    </lineage>
</organism>
<comment type="function">
    <text evidence="1">Prevents the cell division inhibition by proteins MinC and MinD at internal division sites while permitting inhibition at polar sites. This ensures cell division at the proper site by restricting the formation of a division septum at the midpoint of the long axis of the cell.</text>
</comment>
<comment type="similarity">
    <text evidence="1">Belongs to the MinE family.</text>
</comment>